<gene>
    <name evidence="1" type="primary">ubiE</name>
    <name type="ordered locus">H16_A0445</name>
</gene>
<protein>
    <recommendedName>
        <fullName evidence="1">Ubiquinone/menaquinone biosynthesis C-methyltransferase UbiE</fullName>
        <ecNumber evidence="1">2.1.1.163</ecNumber>
        <ecNumber evidence="1">2.1.1.201</ecNumber>
    </recommendedName>
    <alternativeName>
        <fullName evidence="1">2-methoxy-6-polyprenyl-1,4-benzoquinol methylase</fullName>
    </alternativeName>
    <alternativeName>
        <fullName evidence="1">Demethylmenaquinone methyltransferase</fullName>
    </alternativeName>
</protein>
<dbReference type="EC" id="2.1.1.163" evidence="1"/>
<dbReference type="EC" id="2.1.1.201" evidence="1"/>
<dbReference type="EMBL" id="AM260479">
    <property type="protein sequence ID" value="CAJ91595.1"/>
    <property type="molecule type" value="Genomic_DNA"/>
</dbReference>
<dbReference type="RefSeq" id="WP_010814445.1">
    <property type="nucleotide sequence ID" value="NZ_CP039287.1"/>
</dbReference>
<dbReference type="SMR" id="Q0KEH6"/>
<dbReference type="STRING" id="381666.H16_A0445"/>
<dbReference type="KEGG" id="reh:H16_A0445"/>
<dbReference type="eggNOG" id="COG2226">
    <property type="taxonomic scope" value="Bacteria"/>
</dbReference>
<dbReference type="HOGENOM" id="CLU_037990_0_0_4"/>
<dbReference type="OrthoDB" id="9808140at2"/>
<dbReference type="UniPathway" id="UPA00079">
    <property type="reaction ID" value="UER00169"/>
</dbReference>
<dbReference type="UniPathway" id="UPA00232"/>
<dbReference type="Proteomes" id="UP000008210">
    <property type="component" value="Chromosome 1"/>
</dbReference>
<dbReference type="GO" id="GO:0008425">
    <property type="term" value="F:2-methoxy-6-polyprenyl-1,4-benzoquinol methyltransferase activity"/>
    <property type="evidence" value="ECO:0007669"/>
    <property type="project" value="UniProtKB-UniRule"/>
</dbReference>
<dbReference type="GO" id="GO:0043770">
    <property type="term" value="F:demethylmenaquinone methyltransferase activity"/>
    <property type="evidence" value="ECO:0007669"/>
    <property type="project" value="UniProtKB-UniRule"/>
</dbReference>
<dbReference type="GO" id="GO:0009060">
    <property type="term" value="P:aerobic respiration"/>
    <property type="evidence" value="ECO:0007669"/>
    <property type="project" value="UniProtKB-UniRule"/>
</dbReference>
<dbReference type="GO" id="GO:0009234">
    <property type="term" value="P:menaquinone biosynthetic process"/>
    <property type="evidence" value="ECO:0007669"/>
    <property type="project" value="UniProtKB-UniRule"/>
</dbReference>
<dbReference type="GO" id="GO:0032259">
    <property type="term" value="P:methylation"/>
    <property type="evidence" value="ECO:0007669"/>
    <property type="project" value="UniProtKB-KW"/>
</dbReference>
<dbReference type="CDD" id="cd02440">
    <property type="entry name" value="AdoMet_MTases"/>
    <property type="match status" value="1"/>
</dbReference>
<dbReference type="Gene3D" id="3.40.50.150">
    <property type="entry name" value="Vaccinia Virus protein VP39"/>
    <property type="match status" value="1"/>
</dbReference>
<dbReference type="HAMAP" id="MF_01813">
    <property type="entry name" value="MenG_UbiE_methyltr"/>
    <property type="match status" value="1"/>
</dbReference>
<dbReference type="InterPro" id="IPR029063">
    <property type="entry name" value="SAM-dependent_MTases_sf"/>
</dbReference>
<dbReference type="InterPro" id="IPR004033">
    <property type="entry name" value="UbiE/COQ5_MeTrFase"/>
</dbReference>
<dbReference type="InterPro" id="IPR023576">
    <property type="entry name" value="UbiE/COQ5_MeTrFase_CS"/>
</dbReference>
<dbReference type="NCBIfam" id="TIGR01934">
    <property type="entry name" value="MenG_MenH_UbiE"/>
    <property type="match status" value="1"/>
</dbReference>
<dbReference type="NCBIfam" id="NF001240">
    <property type="entry name" value="PRK00216.1-1"/>
    <property type="match status" value="1"/>
</dbReference>
<dbReference type="PANTHER" id="PTHR43591:SF24">
    <property type="entry name" value="2-METHOXY-6-POLYPRENYL-1,4-BENZOQUINOL METHYLASE, MITOCHONDRIAL"/>
    <property type="match status" value="1"/>
</dbReference>
<dbReference type="PANTHER" id="PTHR43591">
    <property type="entry name" value="METHYLTRANSFERASE"/>
    <property type="match status" value="1"/>
</dbReference>
<dbReference type="Pfam" id="PF01209">
    <property type="entry name" value="Ubie_methyltran"/>
    <property type="match status" value="1"/>
</dbReference>
<dbReference type="SUPFAM" id="SSF53335">
    <property type="entry name" value="S-adenosyl-L-methionine-dependent methyltransferases"/>
    <property type="match status" value="1"/>
</dbReference>
<dbReference type="PROSITE" id="PS51608">
    <property type="entry name" value="SAM_MT_UBIE"/>
    <property type="match status" value="1"/>
</dbReference>
<dbReference type="PROSITE" id="PS01183">
    <property type="entry name" value="UBIE_1"/>
    <property type="match status" value="1"/>
</dbReference>
<dbReference type="PROSITE" id="PS01184">
    <property type="entry name" value="UBIE_2"/>
    <property type="match status" value="1"/>
</dbReference>
<name>UBIE_CUPNH</name>
<proteinExistence type="inferred from homology"/>
<comment type="function">
    <text evidence="1">Methyltransferase required for the conversion of demethylmenaquinol (DMKH2) to menaquinol (MKH2) and the conversion of 2-polyprenyl-6-methoxy-1,4-benzoquinol (DDMQH2) to 2-polyprenyl-3-methyl-6-methoxy-1,4-benzoquinol (DMQH2).</text>
</comment>
<comment type="catalytic activity">
    <reaction evidence="1">
        <text>a 2-demethylmenaquinol + S-adenosyl-L-methionine = a menaquinol + S-adenosyl-L-homocysteine + H(+)</text>
        <dbReference type="Rhea" id="RHEA:42640"/>
        <dbReference type="Rhea" id="RHEA-COMP:9539"/>
        <dbReference type="Rhea" id="RHEA-COMP:9563"/>
        <dbReference type="ChEBI" id="CHEBI:15378"/>
        <dbReference type="ChEBI" id="CHEBI:18151"/>
        <dbReference type="ChEBI" id="CHEBI:55437"/>
        <dbReference type="ChEBI" id="CHEBI:57856"/>
        <dbReference type="ChEBI" id="CHEBI:59789"/>
        <dbReference type="EC" id="2.1.1.163"/>
    </reaction>
</comment>
<comment type="catalytic activity">
    <reaction evidence="1">
        <text>a 2-methoxy-6-(all-trans-polyprenyl)benzene-1,4-diol + S-adenosyl-L-methionine = a 5-methoxy-2-methyl-3-(all-trans-polyprenyl)benzene-1,4-diol + S-adenosyl-L-homocysteine + H(+)</text>
        <dbReference type="Rhea" id="RHEA:28286"/>
        <dbReference type="Rhea" id="RHEA-COMP:10858"/>
        <dbReference type="Rhea" id="RHEA-COMP:10859"/>
        <dbReference type="ChEBI" id="CHEBI:15378"/>
        <dbReference type="ChEBI" id="CHEBI:57856"/>
        <dbReference type="ChEBI" id="CHEBI:59789"/>
        <dbReference type="ChEBI" id="CHEBI:84166"/>
        <dbReference type="ChEBI" id="CHEBI:84167"/>
        <dbReference type="EC" id="2.1.1.201"/>
    </reaction>
</comment>
<comment type="pathway">
    <text evidence="1">Quinol/quinone metabolism; menaquinone biosynthesis; menaquinol from 1,4-dihydroxy-2-naphthoate: step 2/2.</text>
</comment>
<comment type="pathway">
    <text evidence="1">Cofactor biosynthesis; ubiquinone biosynthesis.</text>
</comment>
<comment type="similarity">
    <text evidence="1">Belongs to the class I-like SAM-binding methyltransferase superfamily. MenG/UbiE family.</text>
</comment>
<keyword id="KW-0474">Menaquinone biosynthesis</keyword>
<keyword id="KW-0489">Methyltransferase</keyword>
<keyword id="KW-1185">Reference proteome</keyword>
<keyword id="KW-0949">S-adenosyl-L-methionine</keyword>
<keyword id="KW-0808">Transferase</keyword>
<keyword id="KW-0831">Ubiquinone biosynthesis</keyword>
<organism>
    <name type="scientific">Cupriavidus necator (strain ATCC 17699 / DSM 428 / KCTC 22496 / NCIMB 10442 / H16 / Stanier 337)</name>
    <name type="common">Ralstonia eutropha</name>
    <dbReference type="NCBI Taxonomy" id="381666"/>
    <lineage>
        <taxon>Bacteria</taxon>
        <taxon>Pseudomonadati</taxon>
        <taxon>Pseudomonadota</taxon>
        <taxon>Betaproteobacteria</taxon>
        <taxon>Burkholderiales</taxon>
        <taxon>Burkholderiaceae</taxon>
        <taxon>Cupriavidus</taxon>
    </lineage>
</organism>
<sequence length="243" mass="27021">MSETHFGFEKVDEAEKADKVAGVFHSVASKYDVMNDLMSGGMHRLWKMFTIAQAGVRPGHKVLDIAGGTGDLAKAFAKQAGPTGEVWLTDINESMLRVGRDRLLNKGIVTPVCLCDAERIPFPDNHFDLVTVAFGLRNMTHKDAALAEMRRVVKPGGKVMVLEFSKVWKPLEKAYDVYSFKVLPWLGERVAGDAPSYRYLAESIRMHPDQASLVRLMEHAGLENVEYFNLTAGVVALHVGRKY</sequence>
<feature type="chain" id="PRO_1000056280" description="Ubiquinone/menaquinone biosynthesis C-methyltransferase UbiE">
    <location>
        <begin position="1"/>
        <end position="243"/>
    </location>
</feature>
<feature type="binding site" evidence="1">
    <location>
        <position position="69"/>
    </location>
    <ligand>
        <name>S-adenosyl-L-methionine</name>
        <dbReference type="ChEBI" id="CHEBI:59789"/>
    </ligand>
</feature>
<feature type="binding site" evidence="1">
    <location>
        <position position="90"/>
    </location>
    <ligand>
        <name>S-adenosyl-L-methionine</name>
        <dbReference type="ChEBI" id="CHEBI:59789"/>
    </ligand>
</feature>
<feature type="binding site" evidence="1">
    <location>
        <begin position="116"/>
        <end position="117"/>
    </location>
    <ligand>
        <name>S-adenosyl-L-methionine</name>
        <dbReference type="ChEBI" id="CHEBI:59789"/>
    </ligand>
</feature>
<accession>Q0KEH6</accession>
<reference key="1">
    <citation type="journal article" date="2006" name="Nat. Biotechnol.">
        <title>Genome sequence of the bioplastic-producing 'Knallgas' bacterium Ralstonia eutropha H16.</title>
        <authorList>
            <person name="Pohlmann A."/>
            <person name="Fricke W.F."/>
            <person name="Reinecke F."/>
            <person name="Kusian B."/>
            <person name="Liesegang H."/>
            <person name="Cramm R."/>
            <person name="Eitinger T."/>
            <person name="Ewering C."/>
            <person name="Poetter M."/>
            <person name="Schwartz E."/>
            <person name="Strittmatter A."/>
            <person name="Voss I."/>
            <person name="Gottschalk G."/>
            <person name="Steinbuechel A."/>
            <person name="Friedrich B."/>
            <person name="Bowien B."/>
        </authorList>
    </citation>
    <scope>NUCLEOTIDE SEQUENCE [LARGE SCALE GENOMIC DNA]</scope>
    <source>
        <strain>ATCC 17699 / DSM 428 / KCTC 22496 / NCIMB 10442 / H16 / Stanier 337</strain>
    </source>
</reference>
<evidence type="ECO:0000255" key="1">
    <source>
        <dbReference type="HAMAP-Rule" id="MF_01813"/>
    </source>
</evidence>